<name>ARGC_CLOB8</name>
<dbReference type="EC" id="1.2.1.38" evidence="1"/>
<dbReference type="EMBL" id="CP000721">
    <property type="protein sequence ID" value="ABR36626.1"/>
    <property type="molecule type" value="Genomic_DNA"/>
</dbReference>
<dbReference type="RefSeq" id="WP_012060673.1">
    <property type="nucleotide sequence ID" value="NC_009617.1"/>
</dbReference>
<dbReference type="SMR" id="A6M1Z6"/>
<dbReference type="KEGG" id="cbe:Cbei_4517"/>
<dbReference type="eggNOG" id="COG0002">
    <property type="taxonomic scope" value="Bacteria"/>
</dbReference>
<dbReference type="HOGENOM" id="CLU_006384_0_1_9"/>
<dbReference type="UniPathway" id="UPA00068">
    <property type="reaction ID" value="UER00108"/>
</dbReference>
<dbReference type="Proteomes" id="UP000000565">
    <property type="component" value="Chromosome"/>
</dbReference>
<dbReference type="GO" id="GO:0005737">
    <property type="term" value="C:cytoplasm"/>
    <property type="evidence" value="ECO:0007669"/>
    <property type="project" value="UniProtKB-SubCell"/>
</dbReference>
<dbReference type="GO" id="GO:0003942">
    <property type="term" value="F:N-acetyl-gamma-glutamyl-phosphate reductase activity"/>
    <property type="evidence" value="ECO:0007669"/>
    <property type="project" value="UniProtKB-UniRule"/>
</dbReference>
<dbReference type="GO" id="GO:0051287">
    <property type="term" value="F:NAD binding"/>
    <property type="evidence" value="ECO:0007669"/>
    <property type="project" value="InterPro"/>
</dbReference>
<dbReference type="GO" id="GO:0070401">
    <property type="term" value="F:NADP+ binding"/>
    <property type="evidence" value="ECO:0007669"/>
    <property type="project" value="InterPro"/>
</dbReference>
<dbReference type="GO" id="GO:0006526">
    <property type="term" value="P:L-arginine biosynthetic process"/>
    <property type="evidence" value="ECO:0007669"/>
    <property type="project" value="UniProtKB-UniRule"/>
</dbReference>
<dbReference type="CDD" id="cd23934">
    <property type="entry name" value="AGPR_1_C"/>
    <property type="match status" value="1"/>
</dbReference>
<dbReference type="CDD" id="cd17895">
    <property type="entry name" value="AGPR_1_N"/>
    <property type="match status" value="1"/>
</dbReference>
<dbReference type="FunFam" id="3.30.360.10:FF:000014">
    <property type="entry name" value="N-acetyl-gamma-glutamyl-phosphate reductase"/>
    <property type="match status" value="1"/>
</dbReference>
<dbReference type="Gene3D" id="3.30.360.10">
    <property type="entry name" value="Dihydrodipicolinate Reductase, domain 2"/>
    <property type="match status" value="1"/>
</dbReference>
<dbReference type="Gene3D" id="3.40.50.720">
    <property type="entry name" value="NAD(P)-binding Rossmann-like Domain"/>
    <property type="match status" value="1"/>
</dbReference>
<dbReference type="HAMAP" id="MF_00150">
    <property type="entry name" value="ArgC_type1"/>
    <property type="match status" value="1"/>
</dbReference>
<dbReference type="InterPro" id="IPR023013">
    <property type="entry name" value="AGPR_AS"/>
</dbReference>
<dbReference type="InterPro" id="IPR000706">
    <property type="entry name" value="AGPR_type-1"/>
</dbReference>
<dbReference type="InterPro" id="IPR036291">
    <property type="entry name" value="NAD(P)-bd_dom_sf"/>
</dbReference>
<dbReference type="InterPro" id="IPR050085">
    <property type="entry name" value="NAGSA_dehydrogenase"/>
</dbReference>
<dbReference type="InterPro" id="IPR000534">
    <property type="entry name" value="Semialdehyde_DH_NAD-bd"/>
</dbReference>
<dbReference type="NCBIfam" id="TIGR01850">
    <property type="entry name" value="argC"/>
    <property type="match status" value="1"/>
</dbReference>
<dbReference type="PANTHER" id="PTHR32338:SF10">
    <property type="entry name" value="N-ACETYL-GAMMA-GLUTAMYL-PHOSPHATE REDUCTASE, CHLOROPLASTIC-RELATED"/>
    <property type="match status" value="1"/>
</dbReference>
<dbReference type="PANTHER" id="PTHR32338">
    <property type="entry name" value="N-ACETYL-GAMMA-GLUTAMYL-PHOSPHATE REDUCTASE, CHLOROPLASTIC-RELATED-RELATED"/>
    <property type="match status" value="1"/>
</dbReference>
<dbReference type="Pfam" id="PF01118">
    <property type="entry name" value="Semialdhyde_dh"/>
    <property type="match status" value="1"/>
</dbReference>
<dbReference type="Pfam" id="PF22698">
    <property type="entry name" value="Semialdhyde_dhC_1"/>
    <property type="match status" value="1"/>
</dbReference>
<dbReference type="SMART" id="SM00859">
    <property type="entry name" value="Semialdhyde_dh"/>
    <property type="match status" value="1"/>
</dbReference>
<dbReference type="SUPFAM" id="SSF55347">
    <property type="entry name" value="Glyceraldehyde-3-phosphate dehydrogenase-like, C-terminal domain"/>
    <property type="match status" value="1"/>
</dbReference>
<dbReference type="SUPFAM" id="SSF51735">
    <property type="entry name" value="NAD(P)-binding Rossmann-fold domains"/>
    <property type="match status" value="1"/>
</dbReference>
<dbReference type="PROSITE" id="PS01224">
    <property type="entry name" value="ARGC"/>
    <property type="match status" value="1"/>
</dbReference>
<feature type="chain" id="PRO_1000076729" description="N-acetyl-gamma-glutamyl-phosphate reductase">
    <location>
        <begin position="1"/>
        <end position="344"/>
    </location>
</feature>
<feature type="active site" evidence="1">
    <location>
        <position position="148"/>
    </location>
</feature>
<gene>
    <name evidence="1" type="primary">argC</name>
    <name type="ordered locus">Cbei_4517</name>
</gene>
<keyword id="KW-0028">Amino-acid biosynthesis</keyword>
<keyword id="KW-0055">Arginine biosynthesis</keyword>
<keyword id="KW-0963">Cytoplasm</keyword>
<keyword id="KW-0521">NADP</keyword>
<keyword id="KW-0560">Oxidoreductase</keyword>
<proteinExistence type="inferred from homology"/>
<organism>
    <name type="scientific">Clostridium beijerinckii (strain ATCC 51743 / NCIMB 8052)</name>
    <name type="common">Clostridium acetobutylicum</name>
    <dbReference type="NCBI Taxonomy" id="290402"/>
    <lineage>
        <taxon>Bacteria</taxon>
        <taxon>Bacillati</taxon>
        <taxon>Bacillota</taxon>
        <taxon>Clostridia</taxon>
        <taxon>Eubacteriales</taxon>
        <taxon>Clostridiaceae</taxon>
        <taxon>Clostridium</taxon>
    </lineage>
</organism>
<evidence type="ECO:0000255" key="1">
    <source>
        <dbReference type="HAMAP-Rule" id="MF_00150"/>
    </source>
</evidence>
<accession>A6M1Z6</accession>
<comment type="function">
    <text evidence="1">Catalyzes the NADPH-dependent reduction of N-acetyl-5-glutamyl phosphate to yield N-acetyl-L-glutamate 5-semialdehyde.</text>
</comment>
<comment type="catalytic activity">
    <reaction evidence="1">
        <text>N-acetyl-L-glutamate 5-semialdehyde + phosphate + NADP(+) = N-acetyl-L-glutamyl 5-phosphate + NADPH + H(+)</text>
        <dbReference type="Rhea" id="RHEA:21588"/>
        <dbReference type="ChEBI" id="CHEBI:15378"/>
        <dbReference type="ChEBI" id="CHEBI:29123"/>
        <dbReference type="ChEBI" id="CHEBI:43474"/>
        <dbReference type="ChEBI" id="CHEBI:57783"/>
        <dbReference type="ChEBI" id="CHEBI:57936"/>
        <dbReference type="ChEBI" id="CHEBI:58349"/>
        <dbReference type="EC" id="1.2.1.38"/>
    </reaction>
</comment>
<comment type="pathway">
    <text evidence="1">Amino-acid biosynthesis; L-arginine biosynthesis; N(2)-acetyl-L-ornithine from L-glutamate: step 3/4.</text>
</comment>
<comment type="subcellular location">
    <subcellularLocation>
        <location evidence="1">Cytoplasm</location>
    </subcellularLocation>
</comment>
<comment type="similarity">
    <text evidence="1">Belongs to the NAGSA dehydrogenase family. Type 1 subfamily.</text>
</comment>
<sequence length="344" mass="38211">MVKIGIIGATGYVGAELLRLLLSHPKVEVAALSSVSFEGQEISNIYKNFLSKTNLICESAHDVVEKCDVIFTALPHGLSEDIAKKALDNKKVCIDMGADFRLSSEKEYEKWYGKKFTQPEIHTESVYGLPELNRDKIKECSLIANPGCYPTTIELGLMPLLKNSLIKLDNIICDSKSGTTGAGRGLTLNTHFPEENETFAPYKVGAHRHTPEIEETLSSMAEDNVNVTFTPHLLPINRGIVSTIYCIPRDKVNLEEIHKLYTEFYKDERFVNVLPLGDTASIKNVRLTNDCHISLHLNHREDQIIIISTIDNMIKGAAGQAIQNMNIILGFNEAEGLNLIAPAF</sequence>
<protein>
    <recommendedName>
        <fullName evidence="1">N-acetyl-gamma-glutamyl-phosphate reductase</fullName>
        <shortName evidence="1">AGPR</shortName>
        <ecNumber evidence="1">1.2.1.38</ecNumber>
    </recommendedName>
    <alternativeName>
        <fullName evidence="1">N-acetyl-glutamate semialdehyde dehydrogenase</fullName>
        <shortName evidence="1">NAGSA dehydrogenase</shortName>
    </alternativeName>
</protein>
<reference key="1">
    <citation type="submission" date="2007-06" db="EMBL/GenBank/DDBJ databases">
        <title>Complete sequence of Clostridium beijerinckii NCIMB 8052.</title>
        <authorList>
            <consortium name="US DOE Joint Genome Institute"/>
            <person name="Copeland A."/>
            <person name="Lucas S."/>
            <person name="Lapidus A."/>
            <person name="Barry K."/>
            <person name="Detter J.C."/>
            <person name="Glavina del Rio T."/>
            <person name="Hammon N."/>
            <person name="Israni S."/>
            <person name="Dalin E."/>
            <person name="Tice H."/>
            <person name="Pitluck S."/>
            <person name="Sims D."/>
            <person name="Brettin T."/>
            <person name="Bruce D."/>
            <person name="Tapia R."/>
            <person name="Brainard J."/>
            <person name="Schmutz J."/>
            <person name="Larimer F."/>
            <person name="Land M."/>
            <person name="Hauser L."/>
            <person name="Kyrpides N."/>
            <person name="Mikhailova N."/>
            <person name="Bennet G."/>
            <person name="Cann I."/>
            <person name="Chen J.-S."/>
            <person name="Contreras A.L."/>
            <person name="Jones D."/>
            <person name="Kashket E."/>
            <person name="Mitchell W."/>
            <person name="Stoddard S."/>
            <person name="Schwarz W."/>
            <person name="Qureshi N."/>
            <person name="Young M."/>
            <person name="Shi Z."/>
            <person name="Ezeji T."/>
            <person name="White B."/>
            <person name="Blaschek H."/>
            <person name="Richardson P."/>
        </authorList>
    </citation>
    <scope>NUCLEOTIDE SEQUENCE [LARGE SCALE GENOMIC DNA]</scope>
    <source>
        <strain>ATCC 51743 / NCIMB 8052</strain>
    </source>
</reference>